<gene>
    <name evidence="1" type="primary">coaD</name>
    <name type="ordered locus">Oter_3642</name>
</gene>
<name>COAD_OPITP</name>
<dbReference type="EC" id="2.7.7.3" evidence="1"/>
<dbReference type="EMBL" id="CP001032">
    <property type="protein sequence ID" value="ACB76919.1"/>
    <property type="molecule type" value="Genomic_DNA"/>
</dbReference>
<dbReference type="RefSeq" id="WP_012376448.1">
    <property type="nucleotide sequence ID" value="NC_010571.1"/>
</dbReference>
<dbReference type="SMR" id="B1ZWG7"/>
<dbReference type="STRING" id="452637.Oter_3642"/>
<dbReference type="KEGG" id="ote:Oter_3642"/>
<dbReference type="eggNOG" id="COG0669">
    <property type="taxonomic scope" value="Bacteria"/>
</dbReference>
<dbReference type="HOGENOM" id="CLU_100149_0_1_0"/>
<dbReference type="OrthoDB" id="9806661at2"/>
<dbReference type="UniPathway" id="UPA00241">
    <property type="reaction ID" value="UER00355"/>
</dbReference>
<dbReference type="Proteomes" id="UP000007013">
    <property type="component" value="Chromosome"/>
</dbReference>
<dbReference type="GO" id="GO:0005737">
    <property type="term" value="C:cytoplasm"/>
    <property type="evidence" value="ECO:0007669"/>
    <property type="project" value="UniProtKB-SubCell"/>
</dbReference>
<dbReference type="GO" id="GO:0005524">
    <property type="term" value="F:ATP binding"/>
    <property type="evidence" value="ECO:0007669"/>
    <property type="project" value="UniProtKB-KW"/>
</dbReference>
<dbReference type="GO" id="GO:0004595">
    <property type="term" value="F:pantetheine-phosphate adenylyltransferase activity"/>
    <property type="evidence" value="ECO:0007669"/>
    <property type="project" value="UniProtKB-UniRule"/>
</dbReference>
<dbReference type="GO" id="GO:0015937">
    <property type="term" value="P:coenzyme A biosynthetic process"/>
    <property type="evidence" value="ECO:0007669"/>
    <property type="project" value="UniProtKB-UniRule"/>
</dbReference>
<dbReference type="CDD" id="cd02163">
    <property type="entry name" value="PPAT"/>
    <property type="match status" value="1"/>
</dbReference>
<dbReference type="Gene3D" id="3.40.50.620">
    <property type="entry name" value="HUPs"/>
    <property type="match status" value="1"/>
</dbReference>
<dbReference type="HAMAP" id="MF_00151">
    <property type="entry name" value="PPAT_bact"/>
    <property type="match status" value="1"/>
</dbReference>
<dbReference type="InterPro" id="IPR004821">
    <property type="entry name" value="Cyt_trans-like"/>
</dbReference>
<dbReference type="InterPro" id="IPR001980">
    <property type="entry name" value="PPAT"/>
</dbReference>
<dbReference type="InterPro" id="IPR014729">
    <property type="entry name" value="Rossmann-like_a/b/a_fold"/>
</dbReference>
<dbReference type="NCBIfam" id="TIGR01510">
    <property type="entry name" value="coaD_prev_kdtB"/>
    <property type="match status" value="1"/>
</dbReference>
<dbReference type="NCBIfam" id="TIGR00125">
    <property type="entry name" value="cyt_tran_rel"/>
    <property type="match status" value="1"/>
</dbReference>
<dbReference type="PANTHER" id="PTHR21342">
    <property type="entry name" value="PHOSPHOPANTETHEINE ADENYLYLTRANSFERASE"/>
    <property type="match status" value="1"/>
</dbReference>
<dbReference type="PANTHER" id="PTHR21342:SF1">
    <property type="entry name" value="PHOSPHOPANTETHEINE ADENYLYLTRANSFERASE"/>
    <property type="match status" value="1"/>
</dbReference>
<dbReference type="Pfam" id="PF01467">
    <property type="entry name" value="CTP_transf_like"/>
    <property type="match status" value="1"/>
</dbReference>
<dbReference type="PRINTS" id="PR01020">
    <property type="entry name" value="LPSBIOSNTHSS"/>
</dbReference>
<dbReference type="SUPFAM" id="SSF52374">
    <property type="entry name" value="Nucleotidylyl transferase"/>
    <property type="match status" value="1"/>
</dbReference>
<accession>B1ZWG7</accession>
<protein>
    <recommendedName>
        <fullName evidence="1">Phosphopantetheine adenylyltransferase</fullName>
        <ecNumber evidence="1">2.7.7.3</ecNumber>
    </recommendedName>
    <alternativeName>
        <fullName evidence="1">Dephospho-CoA pyrophosphorylase</fullName>
    </alternativeName>
    <alternativeName>
        <fullName evidence="1">Pantetheine-phosphate adenylyltransferase</fullName>
        <shortName evidence="1">PPAT</shortName>
    </alternativeName>
</protein>
<keyword id="KW-0067">ATP-binding</keyword>
<keyword id="KW-0173">Coenzyme A biosynthesis</keyword>
<keyword id="KW-0963">Cytoplasm</keyword>
<keyword id="KW-0460">Magnesium</keyword>
<keyword id="KW-0547">Nucleotide-binding</keyword>
<keyword id="KW-0548">Nucleotidyltransferase</keyword>
<keyword id="KW-1185">Reference proteome</keyword>
<keyword id="KW-0808">Transferase</keyword>
<organism>
    <name type="scientific">Opitutus terrae (strain DSM 11246 / JCM 15787 / PB90-1)</name>
    <dbReference type="NCBI Taxonomy" id="452637"/>
    <lineage>
        <taxon>Bacteria</taxon>
        <taxon>Pseudomonadati</taxon>
        <taxon>Verrucomicrobiota</taxon>
        <taxon>Opitutia</taxon>
        <taxon>Opitutales</taxon>
        <taxon>Opitutaceae</taxon>
        <taxon>Opitutus</taxon>
    </lineage>
</organism>
<reference key="1">
    <citation type="journal article" date="2011" name="J. Bacteriol.">
        <title>Genome sequence of the verrucomicrobium Opitutus terrae PB90-1, an abundant inhabitant of rice paddy soil ecosystems.</title>
        <authorList>
            <person name="van Passel M.W."/>
            <person name="Kant R."/>
            <person name="Palva A."/>
            <person name="Copeland A."/>
            <person name="Lucas S."/>
            <person name="Lapidus A."/>
            <person name="Glavina del Rio T."/>
            <person name="Pitluck S."/>
            <person name="Goltsman E."/>
            <person name="Clum A."/>
            <person name="Sun H."/>
            <person name="Schmutz J."/>
            <person name="Larimer F.W."/>
            <person name="Land M.L."/>
            <person name="Hauser L."/>
            <person name="Kyrpides N."/>
            <person name="Mikhailova N."/>
            <person name="Richardson P.P."/>
            <person name="Janssen P.H."/>
            <person name="de Vos W.M."/>
            <person name="Smidt H."/>
        </authorList>
    </citation>
    <scope>NUCLEOTIDE SEQUENCE [LARGE SCALE GENOMIC DNA]</scope>
    <source>
        <strain>DSM 11246 / JCM 15787 / PB90-1</strain>
    </source>
</reference>
<evidence type="ECO:0000255" key="1">
    <source>
        <dbReference type="HAMAP-Rule" id="MF_00151"/>
    </source>
</evidence>
<sequence length="160" mass="17715">MRHCIYPGTFDPVTYGHLDVLARAVKLFDHVTVAVAENTPKGPLFTSAQRIAMLQPNVTRFPNVSVTSFNSLLVEFAMAQKAIAVIRGLRAFSDFEFEFHMALMNRHLESQIETIFVMPNEQFSYTSSSLVKDVAKHGGDVSHFVPPNVAAALEAVFGTK</sequence>
<comment type="function">
    <text evidence="1">Reversibly transfers an adenylyl group from ATP to 4'-phosphopantetheine, yielding dephospho-CoA (dPCoA) and pyrophosphate.</text>
</comment>
<comment type="catalytic activity">
    <reaction evidence="1">
        <text>(R)-4'-phosphopantetheine + ATP + H(+) = 3'-dephospho-CoA + diphosphate</text>
        <dbReference type="Rhea" id="RHEA:19801"/>
        <dbReference type="ChEBI" id="CHEBI:15378"/>
        <dbReference type="ChEBI" id="CHEBI:30616"/>
        <dbReference type="ChEBI" id="CHEBI:33019"/>
        <dbReference type="ChEBI" id="CHEBI:57328"/>
        <dbReference type="ChEBI" id="CHEBI:61723"/>
        <dbReference type="EC" id="2.7.7.3"/>
    </reaction>
</comment>
<comment type="cofactor">
    <cofactor evidence="1">
        <name>Mg(2+)</name>
        <dbReference type="ChEBI" id="CHEBI:18420"/>
    </cofactor>
</comment>
<comment type="pathway">
    <text evidence="1">Cofactor biosynthesis; coenzyme A biosynthesis; CoA from (R)-pantothenate: step 4/5.</text>
</comment>
<comment type="subunit">
    <text evidence="1">Homohexamer.</text>
</comment>
<comment type="subcellular location">
    <subcellularLocation>
        <location evidence="1">Cytoplasm</location>
    </subcellularLocation>
</comment>
<comment type="similarity">
    <text evidence="1">Belongs to the bacterial CoaD family.</text>
</comment>
<proteinExistence type="inferred from homology"/>
<feature type="chain" id="PRO_1000118083" description="Phosphopantetheine adenylyltransferase">
    <location>
        <begin position="1"/>
        <end position="160"/>
    </location>
</feature>
<feature type="binding site" evidence="1">
    <location>
        <begin position="9"/>
        <end position="10"/>
    </location>
    <ligand>
        <name>ATP</name>
        <dbReference type="ChEBI" id="CHEBI:30616"/>
    </ligand>
</feature>
<feature type="binding site" evidence="1">
    <location>
        <position position="9"/>
    </location>
    <ligand>
        <name>substrate</name>
    </ligand>
</feature>
<feature type="binding site" evidence="1">
    <location>
        <position position="17"/>
    </location>
    <ligand>
        <name>ATP</name>
        <dbReference type="ChEBI" id="CHEBI:30616"/>
    </ligand>
</feature>
<feature type="binding site" evidence="1">
    <location>
        <position position="41"/>
    </location>
    <ligand>
        <name>substrate</name>
    </ligand>
</feature>
<feature type="binding site" evidence="1">
    <location>
        <position position="73"/>
    </location>
    <ligand>
        <name>substrate</name>
    </ligand>
</feature>
<feature type="binding site" evidence="1">
    <location>
        <position position="87"/>
    </location>
    <ligand>
        <name>substrate</name>
    </ligand>
</feature>
<feature type="binding site" evidence="1">
    <location>
        <begin position="88"/>
        <end position="90"/>
    </location>
    <ligand>
        <name>ATP</name>
        <dbReference type="ChEBI" id="CHEBI:30616"/>
    </ligand>
</feature>
<feature type="binding site" evidence="1">
    <location>
        <position position="98"/>
    </location>
    <ligand>
        <name>ATP</name>
        <dbReference type="ChEBI" id="CHEBI:30616"/>
    </ligand>
</feature>
<feature type="binding site" evidence="1">
    <location>
        <begin position="123"/>
        <end position="129"/>
    </location>
    <ligand>
        <name>ATP</name>
        <dbReference type="ChEBI" id="CHEBI:30616"/>
    </ligand>
</feature>
<feature type="site" description="Transition state stabilizer" evidence="1">
    <location>
        <position position="17"/>
    </location>
</feature>